<keyword id="KW-0436">Ligase</keyword>
<keyword id="KW-1185">Reference proteome</keyword>
<reference key="1">
    <citation type="journal article" date="2000" name="Nucleic Acids Res.">
        <title>Complete genome sequence of the alkaliphilic bacterium Bacillus halodurans and genomic sequence comparison with Bacillus subtilis.</title>
        <authorList>
            <person name="Takami H."/>
            <person name="Nakasone K."/>
            <person name="Takaki Y."/>
            <person name="Maeno G."/>
            <person name="Sasaki R."/>
            <person name="Masui N."/>
            <person name="Fuji F."/>
            <person name="Hirama C."/>
            <person name="Nakamura Y."/>
            <person name="Ogasawara N."/>
            <person name="Kuhara S."/>
            <person name="Horikoshi K."/>
        </authorList>
    </citation>
    <scope>NUCLEOTIDE SEQUENCE [LARGE SCALE GENOMIC DNA]</scope>
    <source>
        <strain>ATCC BAA-125 / DSM 18197 / FERM 7344 / JCM 9153 / C-125</strain>
    </source>
</reference>
<organism>
    <name type="scientific">Halalkalibacterium halodurans (strain ATCC BAA-125 / DSM 18197 / FERM 7344 / JCM 9153 / C-125)</name>
    <name type="common">Bacillus halodurans</name>
    <dbReference type="NCBI Taxonomy" id="272558"/>
    <lineage>
        <taxon>Bacteria</taxon>
        <taxon>Bacillati</taxon>
        <taxon>Bacillota</taxon>
        <taxon>Bacilli</taxon>
        <taxon>Bacillales</taxon>
        <taxon>Bacillaceae</taxon>
        <taxon>Halalkalibacterium (ex Joshi et al. 2022)</taxon>
    </lineage>
</organism>
<protein>
    <recommendedName>
        <fullName evidence="1">Putative cysteine ligase BshC</fullName>
        <ecNumber evidence="1">6.-.-.-</ecNumber>
    </recommendedName>
</protein>
<dbReference type="EC" id="6.-.-.-" evidence="1"/>
<dbReference type="EMBL" id="BA000004">
    <property type="protein sequence ID" value="BAB06296.1"/>
    <property type="molecule type" value="Genomic_DNA"/>
</dbReference>
<dbReference type="PIR" id="A83972">
    <property type="entry name" value="A83972"/>
</dbReference>
<dbReference type="RefSeq" id="WP_010898728.1">
    <property type="nucleotide sequence ID" value="NC_002570.2"/>
</dbReference>
<dbReference type="SMR" id="Q9K9R8"/>
<dbReference type="STRING" id="272558.gene:10728475"/>
<dbReference type="KEGG" id="bha:BH2577"/>
<dbReference type="eggNOG" id="COG4365">
    <property type="taxonomic scope" value="Bacteria"/>
</dbReference>
<dbReference type="HOGENOM" id="CLU_022249_1_0_9"/>
<dbReference type="OrthoDB" id="9765151at2"/>
<dbReference type="Proteomes" id="UP000001258">
    <property type="component" value="Chromosome"/>
</dbReference>
<dbReference type="GO" id="GO:0016874">
    <property type="term" value="F:ligase activity"/>
    <property type="evidence" value="ECO:0007669"/>
    <property type="project" value="UniProtKB-UniRule"/>
</dbReference>
<dbReference type="HAMAP" id="MF_01867">
    <property type="entry name" value="BshC"/>
    <property type="match status" value="1"/>
</dbReference>
<dbReference type="InterPro" id="IPR011199">
    <property type="entry name" value="Bacillithiol_biosynth_BshC"/>
</dbReference>
<dbReference type="InterPro" id="IPR055399">
    <property type="entry name" value="CC_BshC"/>
</dbReference>
<dbReference type="InterPro" id="IPR055398">
    <property type="entry name" value="Rossmann-like_BshC"/>
</dbReference>
<dbReference type="NCBIfam" id="TIGR03998">
    <property type="entry name" value="thiol_BshC"/>
    <property type="match status" value="1"/>
</dbReference>
<dbReference type="Pfam" id="PF24850">
    <property type="entry name" value="CC_BshC"/>
    <property type="match status" value="1"/>
</dbReference>
<dbReference type="Pfam" id="PF10079">
    <property type="entry name" value="Rossmann-like_BshC"/>
    <property type="match status" value="1"/>
</dbReference>
<dbReference type="PIRSF" id="PIRSF012535">
    <property type="entry name" value="UCP012535"/>
    <property type="match status" value="1"/>
</dbReference>
<name>BSHC_HALH5</name>
<comment type="function">
    <text evidence="1">Involved in bacillithiol (BSH) biosynthesis. May catalyze the last step of the pathway, the addition of cysteine to glucosamine malate (GlcN-Mal) to generate BSH.</text>
</comment>
<comment type="similarity">
    <text evidence="1">Belongs to the BshC family.</text>
</comment>
<evidence type="ECO:0000255" key="1">
    <source>
        <dbReference type="HAMAP-Rule" id="MF_01867"/>
    </source>
</evidence>
<feature type="chain" id="PRO_0000378218" description="Putative cysteine ligase BshC">
    <location>
        <begin position="1"/>
        <end position="538"/>
    </location>
</feature>
<sequence length="538" mass="62270">MIVEELKLLPSSKAAKDYLNNQNDMLSFFDYNIHQPTVFQQRLSDLQEQPYDRDALSKALLSYQKRFAFHDKAAQQVEKLKDPRSVVVIGGQQAGLLTGPLYTIYKAVTIVLLAREQERALGVPVVPVFWIAGEDHDLDEINAVPIEKNGRWRSHRIEEKRKRIASEAGLNKETLAKWLATVFRSLPETEHTLPLYERVKTLAGRSNTYTDFFAELLLYLFRDEGLVVFDSGDPSFRTLEKSCFHMLIQKTKNVQGAFAHQVKKLEQAGYGRPIITEETNAHLFYVEEGSRYRIDYTGENYELNGKNQTFSREELLEHLTLHPERFSNNVVTRPVMQDALFPVLAFVAGPGEISYWATLKRVFHECGMKMSPVVPRISATCVPSAVQKWFAEKQYSYEEAIAHGLEKEKEGWLEEQTPWPIDQVVEEAITQIRHSHKPIKDLAEQIGETPGKLANKNWSIIESQLRFMERRMKRHVRERFEHELSKFDEAERWLKPNGLLQERHDHVIQLLNIVGDDFIPRLISMNINKMGVHYLVKL</sequence>
<gene>
    <name evidence="1" type="primary">bshC</name>
    <name type="ordered locus">BH2577</name>
</gene>
<proteinExistence type="inferred from homology"/>
<accession>Q9K9R8</accession>